<feature type="chain" id="PRO_1000189211" description="Isoleucine--tRNA ligase">
    <location>
        <begin position="1"/>
        <end position="932"/>
    </location>
</feature>
<feature type="short sequence motif" description="'HIGH' region">
    <location>
        <begin position="57"/>
        <end position="67"/>
    </location>
</feature>
<feature type="short sequence motif" description="'KMSKS' region">
    <location>
        <begin position="600"/>
        <end position="604"/>
    </location>
</feature>
<feature type="binding site" evidence="1">
    <location>
        <position position="559"/>
    </location>
    <ligand>
        <name>L-isoleucyl-5'-AMP</name>
        <dbReference type="ChEBI" id="CHEBI:178002"/>
    </ligand>
</feature>
<feature type="binding site" evidence="1">
    <location>
        <position position="603"/>
    </location>
    <ligand>
        <name>ATP</name>
        <dbReference type="ChEBI" id="CHEBI:30616"/>
    </ligand>
</feature>
<feature type="binding site" evidence="1">
    <location>
        <position position="899"/>
    </location>
    <ligand>
        <name>Zn(2+)</name>
        <dbReference type="ChEBI" id="CHEBI:29105"/>
    </ligand>
</feature>
<feature type="binding site" evidence="1">
    <location>
        <position position="902"/>
    </location>
    <ligand>
        <name>Zn(2+)</name>
        <dbReference type="ChEBI" id="CHEBI:29105"/>
    </ligand>
</feature>
<feature type="binding site" evidence="1">
    <location>
        <position position="919"/>
    </location>
    <ligand>
        <name>Zn(2+)</name>
        <dbReference type="ChEBI" id="CHEBI:29105"/>
    </ligand>
</feature>
<feature type="binding site" evidence="1">
    <location>
        <position position="922"/>
    </location>
    <ligand>
        <name>Zn(2+)</name>
        <dbReference type="ChEBI" id="CHEBI:29105"/>
    </ligand>
</feature>
<organism>
    <name type="scientific">Thermoanaerobacter sp. (strain X514)</name>
    <dbReference type="NCBI Taxonomy" id="399726"/>
    <lineage>
        <taxon>Bacteria</taxon>
        <taxon>Bacillati</taxon>
        <taxon>Bacillota</taxon>
        <taxon>Clostridia</taxon>
        <taxon>Thermoanaerobacterales</taxon>
        <taxon>Thermoanaerobacteraceae</taxon>
        <taxon>Thermoanaerobacter</taxon>
    </lineage>
</organism>
<proteinExistence type="inferred from homology"/>
<accession>B0K2W1</accession>
<comment type="function">
    <text evidence="1">Catalyzes the attachment of isoleucine to tRNA(Ile). As IleRS can inadvertently accommodate and process structurally similar amino acids such as valine, to avoid such errors it has two additional distinct tRNA(Ile)-dependent editing activities. One activity is designated as 'pretransfer' editing and involves the hydrolysis of activated Val-AMP. The other activity is designated 'posttransfer' editing and involves deacylation of mischarged Val-tRNA(Ile).</text>
</comment>
<comment type="catalytic activity">
    <reaction evidence="1">
        <text>tRNA(Ile) + L-isoleucine + ATP = L-isoleucyl-tRNA(Ile) + AMP + diphosphate</text>
        <dbReference type="Rhea" id="RHEA:11060"/>
        <dbReference type="Rhea" id="RHEA-COMP:9666"/>
        <dbReference type="Rhea" id="RHEA-COMP:9695"/>
        <dbReference type="ChEBI" id="CHEBI:30616"/>
        <dbReference type="ChEBI" id="CHEBI:33019"/>
        <dbReference type="ChEBI" id="CHEBI:58045"/>
        <dbReference type="ChEBI" id="CHEBI:78442"/>
        <dbReference type="ChEBI" id="CHEBI:78528"/>
        <dbReference type="ChEBI" id="CHEBI:456215"/>
        <dbReference type="EC" id="6.1.1.5"/>
    </reaction>
</comment>
<comment type="cofactor">
    <cofactor evidence="1">
        <name>Zn(2+)</name>
        <dbReference type="ChEBI" id="CHEBI:29105"/>
    </cofactor>
    <text evidence="1">Binds 1 zinc ion per subunit.</text>
</comment>
<comment type="subunit">
    <text evidence="1">Monomer.</text>
</comment>
<comment type="subcellular location">
    <subcellularLocation>
        <location evidence="1">Cytoplasm</location>
    </subcellularLocation>
</comment>
<comment type="domain">
    <text evidence="1">IleRS has two distinct active sites: one for aminoacylation and one for editing. The misactivated valine is translocated from the active site to the editing site, which sterically excludes the correctly activated isoleucine. The single editing site contains two valyl binding pockets, one specific for each substrate (Val-AMP or Val-tRNA(Ile)).</text>
</comment>
<comment type="similarity">
    <text evidence="1">Belongs to the class-I aminoacyl-tRNA synthetase family. IleS type 1 subfamily.</text>
</comment>
<reference key="1">
    <citation type="submission" date="2008-01" db="EMBL/GenBank/DDBJ databases">
        <title>Complete sequence of Thermoanaerobacter sp. X514.</title>
        <authorList>
            <consortium name="US DOE Joint Genome Institute"/>
            <person name="Copeland A."/>
            <person name="Lucas S."/>
            <person name="Lapidus A."/>
            <person name="Barry K."/>
            <person name="Glavina del Rio T."/>
            <person name="Dalin E."/>
            <person name="Tice H."/>
            <person name="Pitluck S."/>
            <person name="Bruce D."/>
            <person name="Goodwin L."/>
            <person name="Saunders E."/>
            <person name="Brettin T."/>
            <person name="Detter J.C."/>
            <person name="Han C."/>
            <person name="Schmutz J."/>
            <person name="Larimer F."/>
            <person name="Land M."/>
            <person name="Hauser L."/>
            <person name="Kyrpides N."/>
            <person name="Kim E."/>
            <person name="Hemme C."/>
            <person name="Fields M.W."/>
            <person name="He Z."/>
            <person name="Zhou J."/>
            <person name="Richardson P."/>
        </authorList>
    </citation>
    <scope>NUCLEOTIDE SEQUENCE [LARGE SCALE GENOMIC DNA]</scope>
    <source>
        <strain>X514</strain>
    </source>
</reference>
<sequence length="932" mass="107851">MDYNKTLNLPRTDFPMKANLPTREPEILKRWEEMDIYHKTLEKNKGKEKYILHDGPPYANGDIHIGTAMNKVLKDIIVKYKTMRGYDAPYVPGWDTHGLPIEQQAIKTLGIKRHEVSPTEFRKVCRDFAFSQIEKQKAQFKRLGVRGDWDNPYLTLNPEYEAKQIEVFGEMAKKGYIYKGLKPVYWCPSCETALAEAEIEYFDETSDSIYVKFRVKDDLGKFKGIVENLNNVYFVIWTTTTWTIPANLAIALNPEFDYALAKFGDEVYIMAKDMLDTVKKEANLSDYEIVAVFKGKDLEGMKATHPLYDRDSLIILGEHVTLEAGTGCVHTAPGHGEEDFLVGQEYGLEVLNPIDDKGYFTDKAPGYAGLYYEEANKVIKEDLKKANALVAETRITHSYPHCWRCKSPIIFRATEQWFASVEGFREEALKAIKEVNWYPSWGEERITNMVRDRRDWCISRQRVWGVPIPIFYCEKCGKPLINDDTINAVKKIFRQKGSDAWFEMSAEEILPKGITCECGSTKFRKETDIMDVWFDSGSSHAAVLQTHPDLKWPAELYLEGSDQHRGWFQSSLLTSVATRGKAPYRNVLTHGFVVDGEGRKMSKSLGNGIDPADVIKEYGADILRLWTVSADFTSDMRISQEILKQMTEAYRKIRNTSKFLLSNLYDFDPDKDMLPYEELLEIDKWALFRLNRVVEELTEAFDKYEYYDFLHLVHTFCVVDMSSLYLDILKDRLYTYPATSKERRAAQTTLYIILDTLVRLIAPVLTFTSEEIWSYMKHDSQNNFESVQLADWPQVQEKYNNPYIIEKWEKLFDIRKDISKALEIARTDKKIGHSLEAQVDIYPSQELYDFFKGFNDLEYVFIVSKVVLHQPEEPAPQNAYESDDYNLKIVVTHAPGEKCERCWMYSETVGTIKEHPTICARCASHIEQQTQV</sequence>
<keyword id="KW-0030">Aminoacyl-tRNA synthetase</keyword>
<keyword id="KW-0067">ATP-binding</keyword>
<keyword id="KW-0963">Cytoplasm</keyword>
<keyword id="KW-0436">Ligase</keyword>
<keyword id="KW-0479">Metal-binding</keyword>
<keyword id="KW-0547">Nucleotide-binding</keyword>
<keyword id="KW-0648">Protein biosynthesis</keyword>
<keyword id="KW-0862">Zinc</keyword>
<evidence type="ECO:0000255" key="1">
    <source>
        <dbReference type="HAMAP-Rule" id="MF_02002"/>
    </source>
</evidence>
<gene>
    <name evidence="1" type="primary">ileS</name>
    <name type="ordered locus">Teth514_1886</name>
</gene>
<name>SYI_THEPX</name>
<dbReference type="EC" id="6.1.1.5" evidence="1"/>
<dbReference type="EMBL" id="CP000923">
    <property type="protein sequence ID" value="ABY93166.1"/>
    <property type="molecule type" value="Genomic_DNA"/>
</dbReference>
<dbReference type="RefSeq" id="WP_009052491.1">
    <property type="nucleotide sequence ID" value="NC_010320.1"/>
</dbReference>
<dbReference type="SMR" id="B0K2W1"/>
<dbReference type="KEGG" id="tex:Teth514_1886"/>
<dbReference type="HOGENOM" id="CLU_001493_7_0_9"/>
<dbReference type="Proteomes" id="UP000002155">
    <property type="component" value="Chromosome"/>
</dbReference>
<dbReference type="GO" id="GO:0005829">
    <property type="term" value="C:cytosol"/>
    <property type="evidence" value="ECO:0007669"/>
    <property type="project" value="TreeGrafter"/>
</dbReference>
<dbReference type="GO" id="GO:0002161">
    <property type="term" value="F:aminoacyl-tRNA deacylase activity"/>
    <property type="evidence" value="ECO:0007669"/>
    <property type="project" value="InterPro"/>
</dbReference>
<dbReference type="GO" id="GO:0005524">
    <property type="term" value="F:ATP binding"/>
    <property type="evidence" value="ECO:0007669"/>
    <property type="project" value="UniProtKB-UniRule"/>
</dbReference>
<dbReference type="GO" id="GO:0004822">
    <property type="term" value="F:isoleucine-tRNA ligase activity"/>
    <property type="evidence" value="ECO:0007669"/>
    <property type="project" value="UniProtKB-UniRule"/>
</dbReference>
<dbReference type="GO" id="GO:0000049">
    <property type="term" value="F:tRNA binding"/>
    <property type="evidence" value="ECO:0007669"/>
    <property type="project" value="InterPro"/>
</dbReference>
<dbReference type="GO" id="GO:0008270">
    <property type="term" value="F:zinc ion binding"/>
    <property type="evidence" value="ECO:0007669"/>
    <property type="project" value="UniProtKB-UniRule"/>
</dbReference>
<dbReference type="GO" id="GO:0006428">
    <property type="term" value="P:isoleucyl-tRNA aminoacylation"/>
    <property type="evidence" value="ECO:0007669"/>
    <property type="project" value="UniProtKB-UniRule"/>
</dbReference>
<dbReference type="CDD" id="cd07960">
    <property type="entry name" value="Anticodon_Ia_Ile_BEm"/>
    <property type="match status" value="1"/>
</dbReference>
<dbReference type="CDD" id="cd00818">
    <property type="entry name" value="IleRS_core"/>
    <property type="match status" value="1"/>
</dbReference>
<dbReference type="FunFam" id="1.10.730.20:FF:000001">
    <property type="entry name" value="Isoleucine--tRNA ligase"/>
    <property type="match status" value="1"/>
</dbReference>
<dbReference type="FunFam" id="3.40.50.620:FF:000152">
    <property type="entry name" value="Isoleucine--tRNA ligase"/>
    <property type="match status" value="1"/>
</dbReference>
<dbReference type="Gene3D" id="1.10.730.20">
    <property type="match status" value="1"/>
</dbReference>
<dbReference type="Gene3D" id="3.40.50.620">
    <property type="entry name" value="HUPs"/>
    <property type="match status" value="2"/>
</dbReference>
<dbReference type="Gene3D" id="1.10.10.830">
    <property type="entry name" value="Ile-tRNA synthetase CP2 domain-like"/>
    <property type="match status" value="1"/>
</dbReference>
<dbReference type="HAMAP" id="MF_02002">
    <property type="entry name" value="Ile_tRNA_synth_type1"/>
    <property type="match status" value="1"/>
</dbReference>
<dbReference type="InterPro" id="IPR001412">
    <property type="entry name" value="aa-tRNA-synth_I_CS"/>
</dbReference>
<dbReference type="InterPro" id="IPR002300">
    <property type="entry name" value="aa-tRNA-synth_Ia"/>
</dbReference>
<dbReference type="InterPro" id="IPR033708">
    <property type="entry name" value="Anticodon_Ile_BEm"/>
</dbReference>
<dbReference type="InterPro" id="IPR002301">
    <property type="entry name" value="Ile-tRNA-ligase"/>
</dbReference>
<dbReference type="InterPro" id="IPR023585">
    <property type="entry name" value="Ile-tRNA-ligase_type1"/>
</dbReference>
<dbReference type="InterPro" id="IPR050081">
    <property type="entry name" value="Ile-tRNA_ligase"/>
</dbReference>
<dbReference type="InterPro" id="IPR013155">
    <property type="entry name" value="M/V/L/I-tRNA-synth_anticd-bd"/>
</dbReference>
<dbReference type="InterPro" id="IPR014729">
    <property type="entry name" value="Rossmann-like_a/b/a_fold"/>
</dbReference>
<dbReference type="InterPro" id="IPR009080">
    <property type="entry name" value="tRNAsynth_Ia_anticodon-bd"/>
</dbReference>
<dbReference type="InterPro" id="IPR009008">
    <property type="entry name" value="Val/Leu/Ile-tRNA-synth_edit"/>
</dbReference>
<dbReference type="InterPro" id="IPR010663">
    <property type="entry name" value="Znf_FPG/IleRS"/>
</dbReference>
<dbReference type="NCBIfam" id="TIGR00392">
    <property type="entry name" value="ileS"/>
    <property type="match status" value="1"/>
</dbReference>
<dbReference type="PANTHER" id="PTHR42765:SF1">
    <property type="entry name" value="ISOLEUCINE--TRNA LIGASE, MITOCHONDRIAL"/>
    <property type="match status" value="1"/>
</dbReference>
<dbReference type="PANTHER" id="PTHR42765">
    <property type="entry name" value="SOLEUCYL-TRNA SYNTHETASE"/>
    <property type="match status" value="1"/>
</dbReference>
<dbReference type="Pfam" id="PF08264">
    <property type="entry name" value="Anticodon_1"/>
    <property type="match status" value="1"/>
</dbReference>
<dbReference type="Pfam" id="PF00133">
    <property type="entry name" value="tRNA-synt_1"/>
    <property type="match status" value="1"/>
</dbReference>
<dbReference type="Pfam" id="PF06827">
    <property type="entry name" value="zf-FPG_IleRS"/>
    <property type="match status" value="1"/>
</dbReference>
<dbReference type="PRINTS" id="PR00984">
    <property type="entry name" value="TRNASYNTHILE"/>
</dbReference>
<dbReference type="SUPFAM" id="SSF47323">
    <property type="entry name" value="Anticodon-binding domain of a subclass of class I aminoacyl-tRNA synthetases"/>
    <property type="match status" value="1"/>
</dbReference>
<dbReference type="SUPFAM" id="SSF52374">
    <property type="entry name" value="Nucleotidylyl transferase"/>
    <property type="match status" value="1"/>
</dbReference>
<dbReference type="SUPFAM" id="SSF50677">
    <property type="entry name" value="ValRS/IleRS/LeuRS editing domain"/>
    <property type="match status" value="1"/>
</dbReference>
<dbReference type="PROSITE" id="PS00178">
    <property type="entry name" value="AA_TRNA_LIGASE_I"/>
    <property type="match status" value="1"/>
</dbReference>
<protein>
    <recommendedName>
        <fullName evidence="1">Isoleucine--tRNA ligase</fullName>
        <ecNumber evidence="1">6.1.1.5</ecNumber>
    </recommendedName>
    <alternativeName>
        <fullName evidence="1">Isoleucyl-tRNA synthetase</fullName>
        <shortName evidence="1">IleRS</shortName>
    </alternativeName>
</protein>